<dbReference type="EMBL" id="CP000377">
    <property type="protein sequence ID" value="ABF62988.1"/>
    <property type="molecule type" value="Genomic_DNA"/>
</dbReference>
<dbReference type="RefSeq" id="WP_005621904.1">
    <property type="nucleotide sequence ID" value="NC_008044.1"/>
</dbReference>
<dbReference type="SMR" id="Q1GK28"/>
<dbReference type="STRING" id="292414.TM1040_0255"/>
<dbReference type="GeneID" id="28248365"/>
<dbReference type="KEGG" id="sit:TM1040_0255"/>
<dbReference type="eggNOG" id="COG0092">
    <property type="taxonomic scope" value="Bacteria"/>
</dbReference>
<dbReference type="HOGENOM" id="CLU_058591_0_2_5"/>
<dbReference type="OrthoDB" id="9806396at2"/>
<dbReference type="Proteomes" id="UP000000636">
    <property type="component" value="Chromosome"/>
</dbReference>
<dbReference type="GO" id="GO:0022627">
    <property type="term" value="C:cytosolic small ribosomal subunit"/>
    <property type="evidence" value="ECO:0007669"/>
    <property type="project" value="TreeGrafter"/>
</dbReference>
<dbReference type="GO" id="GO:0003729">
    <property type="term" value="F:mRNA binding"/>
    <property type="evidence" value="ECO:0007669"/>
    <property type="project" value="UniProtKB-UniRule"/>
</dbReference>
<dbReference type="GO" id="GO:0019843">
    <property type="term" value="F:rRNA binding"/>
    <property type="evidence" value="ECO:0007669"/>
    <property type="project" value="UniProtKB-UniRule"/>
</dbReference>
<dbReference type="GO" id="GO:0003735">
    <property type="term" value="F:structural constituent of ribosome"/>
    <property type="evidence" value="ECO:0007669"/>
    <property type="project" value="InterPro"/>
</dbReference>
<dbReference type="GO" id="GO:0006412">
    <property type="term" value="P:translation"/>
    <property type="evidence" value="ECO:0007669"/>
    <property type="project" value="UniProtKB-UniRule"/>
</dbReference>
<dbReference type="CDD" id="cd02412">
    <property type="entry name" value="KH-II_30S_S3"/>
    <property type="match status" value="1"/>
</dbReference>
<dbReference type="FunFam" id="3.30.1140.32:FF:000001">
    <property type="entry name" value="30S ribosomal protein S3"/>
    <property type="match status" value="1"/>
</dbReference>
<dbReference type="FunFam" id="3.30.300.20:FF:000001">
    <property type="entry name" value="30S ribosomal protein S3"/>
    <property type="match status" value="1"/>
</dbReference>
<dbReference type="Gene3D" id="3.30.300.20">
    <property type="match status" value="1"/>
</dbReference>
<dbReference type="Gene3D" id="3.30.1140.32">
    <property type="entry name" value="Ribosomal protein S3, C-terminal domain"/>
    <property type="match status" value="1"/>
</dbReference>
<dbReference type="HAMAP" id="MF_01309_B">
    <property type="entry name" value="Ribosomal_uS3_B"/>
    <property type="match status" value="1"/>
</dbReference>
<dbReference type="InterPro" id="IPR004087">
    <property type="entry name" value="KH_dom"/>
</dbReference>
<dbReference type="InterPro" id="IPR015946">
    <property type="entry name" value="KH_dom-like_a/b"/>
</dbReference>
<dbReference type="InterPro" id="IPR004044">
    <property type="entry name" value="KH_dom_type_2"/>
</dbReference>
<dbReference type="InterPro" id="IPR009019">
    <property type="entry name" value="KH_sf_prok-type"/>
</dbReference>
<dbReference type="InterPro" id="IPR036419">
    <property type="entry name" value="Ribosomal_S3_C_sf"/>
</dbReference>
<dbReference type="InterPro" id="IPR005704">
    <property type="entry name" value="Ribosomal_uS3_bac-typ"/>
</dbReference>
<dbReference type="InterPro" id="IPR001351">
    <property type="entry name" value="Ribosomal_uS3_C"/>
</dbReference>
<dbReference type="InterPro" id="IPR018280">
    <property type="entry name" value="Ribosomal_uS3_CS"/>
</dbReference>
<dbReference type="NCBIfam" id="TIGR01009">
    <property type="entry name" value="rpsC_bact"/>
    <property type="match status" value="1"/>
</dbReference>
<dbReference type="PANTHER" id="PTHR11760">
    <property type="entry name" value="30S/40S RIBOSOMAL PROTEIN S3"/>
    <property type="match status" value="1"/>
</dbReference>
<dbReference type="PANTHER" id="PTHR11760:SF19">
    <property type="entry name" value="SMALL RIBOSOMAL SUBUNIT PROTEIN US3C"/>
    <property type="match status" value="1"/>
</dbReference>
<dbReference type="Pfam" id="PF07650">
    <property type="entry name" value="KH_2"/>
    <property type="match status" value="1"/>
</dbReference>
<dbReference type="Pfam" id="PF00189">
    <property type="entry name" value="Ribosomal_S3_C"/>
    <property type="match status" value="1"/>
</dbReference>
<dbReference type="SMART" id="SM00322">
    <property type="entry name" value="KH"/>
    <property type="match status" value="1"/>
</dbReference>
<dbReference type="SUPFAM" id="SSF54814">
    <property type="entry name" value="Prokaryotic type KH domain (KH-domain type II)"/>
    <property type="match status" value="1"/>
</dbReference>
<dbReference type="SUPFAM" id="SSF54821">
    <property type="entry name" value="Ribosomal protein S3 C-terminal domain"/>
    <property type="match status" value="1"/>
</dbReference>
<dbReference type="PROSITE" id="PS50823">
    <property type="entry name" value="KH_TYPE_2"/>
    <property type="match status" value="1"/>
</dbReference>
<dbReference type="PROSITE" id="PS00548">
    <property type="entry name" value="RIBOSOMAL_S3"/>
    <property type="match status" value="1"/>
</dbReference>
<proteinExistence type="inferred from homology"/>
<name>RS3_RUEST</name>
<comment type="function">
    <text evidence="1">Binds the lower part of the 30S subunit head. Binds mRNA in the 70S ribosome, positioning it for translation.</text>
</comment>
<comment type="subunit">
    <text evidence="1">Part of the 30S ribosomal subunit. Forms a tight complex with proteins S10 and S14.</text>
</comment>
<comment type="similarity">
    <text evidence="1">Belongs to the universal ribosomal protein uS3 family.</text>
</comment>
<reference key="1">
    <citation type="submission" date="2006-05" db="EMBL/GenBank/DDBJ databases">
        <title>Complete sequence of chromosome of Silicibacter sp. TM1040.</title>
        <authorList>
            <consortium name="US DOE Joint Genome Institute"/>
            <person name="Copeland A."/>
            <person name="Lucas S."/>
            <person name="Lapidus A."/>
            <person name="Barry K."/>
            <person name="Detter J.C."/>
            <person name="Glavina del Rio T."/>
            <person name="Hammon N."/>
            <person name="Israni S."/>
            <person name="Dalin E."/>
            <person name="Tice H."/>
            <person name="Pitluck S."/>
            <person name="Brettin T."/>
            <person name="Bruce D."/>
            <person name="Han C."/>
            <person name="Tapia R."/>
            <person name="Goodwin L."/>
            <person name="Thompson L.S."/>
            <person name="Gilna P."/>
            <person name="Schmutz J."/>
            <person name="Larimer F."/>
            <person name="Land M."/>
            <person name="Hauser L."/>
            <person name="Kyrpides N."/>
            <person name="Kim E."/>
            <person name="Belas R."/>
            <person name="Moran M.A."/>
            <person name="Buchan A."/>
            <person name="Gonzalez J.M."/>
            <person name="Schell M.A."/>
            <person name="Sun F."/>
            <person name="Richardson P."/>
        </authorList>
    </citation>
    <scope>NUCLEOTIDE SEQUENCE [LARGE SCALE GENOMIC DNA]</scope>
    <source>
        <strain>TM1040</strain>
    </source>
</reference>
<sequence length="239" mass="27073">MGHKVNPVGMRLQINRTWDSRWYADTKDYGDLLLEDIKIREFIKEECKQAGVARVIIERPHKKCRVTIHTARPGVIIGKKGADIEVLRKKIASMTDSELHLNIVEVRKPELDAQLVGESIAQQLERRVSFRRAMKRAVQNAMRMGALGIRVNVAGRLGGAEIARTEWYREGRVPLHTLRADIDYAHSEASTPYGIIGIKVWIFKGEIMEHDPQARDRKAQELQDGPAPRGAGGNRRGDR</sequence>
<feature type="chain" id="PRO_0000293887" description="Small ribosomal subunit protein uS3">
    <location>
        <begin position="1"/>
        <end position="239"/>
    </location>
</feature>
<feature type="domain" description="KH type-2" evidence="1">
    <location>
        <begin position="39"/>
        <end position="107"/>
    </location>
</feature>
<feature type="region of interest" description="Disordered" evidence="2">
    <location>
        <begin position="212"/>
        <end position="239"/>
    </location>
</feature>
<feature type="compositionally biased region" description="Basic and acidic residues" evidence="2">
    <location>
        <begin position="212"/>
        <end position="221"/>
    </location>
</feature>
<feature type="compositionally biased region" description="Gly residues" evidence="2">
    <location>
        <begin position="230"/>
        <end position="239"/>
    </location>
</feature>
<keyword id="KW-1185">Reference proteome</keyword>
<keyword id="KW-0687">Ribonucleoprotein</keyword>
<keyword id="KW-0689">Ribosomal protein</keyword>
<keyword id="KW-0694">RNA-binding</keyword>
<keyword id="KW-0699">rRNA-binding</keyword>
<accession>Q1GK28</accession>
<organism>
    <name type="scientific">Ruegeria sp. (strain TM1040)</name>
    <name type="common">Silicibacter sp.</name>
    <dbReference type="NCBI Taxonomy" id="292414"/>
    <lineage>
        <taxon>Bacteria</taxon>
        <taxon>Pseudomonadati</taxon>
        <taxon>Pseudomonadota</taxon>
        <taxon>Alphaproteobacteria</taxon>
        <taxon>Rhodobacterales</taxon>
        <taxon>Roseobacteraceae</taxon>
        <taxon>Ruegeria</taxon>
    </lineage>
</organism>
<protein>
    <recommendedName>
        <fullName evidence="1">Small ribosomal subunit protein uS3</fullName>
    </recommendedName>
    <alternativeName>
        <fullName evidence="3">30S ribosomal protein S3</fullName>
    </alternativeName>
</protein>
<evidence type="ECO:0000255" key="1">
    <source>
        <dbReference type="HAMAP-Rule" id="MF_01309"/>
    </source>
</evidence>
<evidence type="ECO:0000256" key="2">
    <source>
        <dbReference type="SAM" id="MobiDB-lite"/>
    </source>
</evidence>
<evidence type="ECO:0000305" key="3"/>
<gene>
    <name evidence="1" type="primary">rpsC</name>
    <name type="ordered locus">TM1040_0255</name>
</gene>